<gene>
    <name evidence="1" type="primary">dtd</name>
    <name type="ordered locus">FP0247</name>
</gene>
<comment type="function">
    <text evidence="1">An aminoacyl-tRNA editing enzyme that deacylates mischarged D-aminoacyl-tRNAs. Also deacylates mischarged glycyl-tRNA(Ala), protecting cells against glycine mischarging by AlaRS. Acts via tRNA-based rather than protein-based catalysis; rejects L-amino acids rather than detecting D-amino acids in the active site. By recycling D-aminoacyl-tRNA to D-amino acids and free tRNA molecules, this enzyme counteracts the toxicity associated with the formation of D-aminoacyl-tRNA entities in vivo and helps enforce protein L-homochirality.</text>
</comment>
<comment type="catalytic activity">
    <reaction evidence="1">
        <text>glycyl-tRNA(Ala) + H2O = tRNA(Ala) + glycine + H(+)</text>
        <dbReference type="Rhea" id="RHEA:53744"/>
        <dbReference type="Rhea" id="RHEA-COMP:9657"/>
        <dbReference type="Rhea" id="RHEA-COMP:13640"/>
        <dbReference type="ChEBI" id="CHEBI:15377"/>
        <dbReference type="ChEBI" id="CHEBI:15378"/>
        <dbReference type="ChEBI" id="CHEBI:57305"/>
        <dbReference type="ChEBI" id="CHEBI:78442"/>
        <dbReference type="ChEBI" id="CHEBI:78522"/>
        <dbReference type="EC" id="3.1.1.96"/>
    </reaction>
</comment>
<comment type="catalytic activity">
    <reaction evidence="1">
        <text>a D-aminoacyl-tRNA + H2O = a tRNA + a D-alpha-amino acid + H(+)</text>
        <dbReference type="Rhea" id="RHEA:13953"/>
        <dbReference type="Rhea" id="RHEA-COMP:10123"/>
        <dbReference type="Rhea" id="RHEA-COMP:10124"/>
        <dbReference type="ChEBI" id="CHEBI:15377"/>
        <dbReference type="ChEBI" id="CHEBI:15378"/>
        <dbReference type="ChEBI" id="CHEBI:59871"/>
        <dbReference type="ChEBI" id="CHEBI:78442"/>
        <dbReference type="ChEBI" id="CHEBI:79333"/>
        <dbReference type="EC" id="3.1.1.96"/>
    </reaction>
</comment>
<comment type="subunit">
    <text evidence="1">Homodimer.</text>
</comment>
<comment type="subcellular location">
    <subcellularLocation>
        <location evidence="1">Cytoplasm</location>
    </subcellularLocation>
</comment>
<comment type="domain">
    <text evidence="1">A Gly-cisPro motif from one monomer fits into the active site of the other monomer to allow specific chiral rejection of L-amino acids.</text>
</comment>
<comment type="similarity">
    <text evidence="1">Belongs to the DTD family.</text>
</comment>
<keyword id="KW-0963">Cytoplasm</keyword>
<keyword id="KW-0378">Hydrolase</keyword>
<keyword id="KW-1185">Reference proteome</keyword>
<keyword id="KW-0694">RNA-binding</keyword>
<keyword id="KW-0820">tRNA-binding</keyword>
<protein>
    <recommendedName>
        <fullName evidence="1">D-aminoacyl-tRNA deacylase</fullName>
        <shortName evidence="1">DTD</shortName>
        <ecNumber evidence="1">3.1.1.96</ecNumber>
    </recommendedName>
    <alternativeName>
        <fullName evidence="1">Gly-tRNA(Ala) deacylase</fullName>
    </alternativeName>
</protein>
<dbReference type="EC" id="3.1.1.96" evidence="1"/>
<dbReference type="EMBL" id="AM398681">
    <property type="protein sequence ID" value="CAL42362.1"/>
    <property type="molecule type" value="Genomic_DNA"/>
</dbReference>
<dbReference type="RefSeq" id="WP_011962422.1">
    <property type="nucleotide sequence ID" value="NC_009613.3"/>
</dbReference>
<dbReference type="RefSeq" id="YP_001295182.1">
    <property type="nucleotide sequence ID" value="NC_009613.3"/>
</dbReference>
<dbReference type="SMR" id="A6GW89"/>
<dbReference type="STRING" id="402612.FP0247"/>
<dbReference type="EnsemblBacteria" id="CAL42362">
    <property type="protein sequence ID" value="CAL42362"/>
    <property type="gene ID" value="FP0247"/>
</dbReference>
<dbReference type="GeneID" id="66553876"/>
<dbReference type="KEGG" id="fps:FP0247"/>
<dbReference type="PATRIC" id="fig|402612.5.peg.256"/>
<dbReference type="eggNOG" id="COG1490">
    <property type="taxonomic scope" value="Bacteria"/>
</dbReference>
<dbReference type="HOGENOM" id="CLU_076901_1_0_10"/>
<dbReference type="OrthoDB" id="9801395at2"/>
<dbReference type="Proteomes" id="UP000006394">
    <property type="component" value="Chromosome"/>
</dbReference>
<dbReference type="GO" id="GO:0005737">
    <property type="term" value="C:cytoplasm"/>
    <property type="evidence" value="ECO:0007669"/>
    <property type="project" value="UniProtKB-SubCell"/>
</dbReference>
<dbReference type="GO" id="GO:0051500">
    <property type="term" value="F:D-tyrosyl-tRNA(Tyr) deacylase activity"/>
    <property type="evidence" value="ECO:0007669"/>
    <property type="project" value="TreeGrafter"/>
</dbReference>
<dbReference type="GO" id="GO:0106026">
    <property type="term" value="F:Gly-tRNA(Ala) deacylase activity"/>
    <property type="evidence" value="ECO:0007669"/>
    <property type="project" value="UniProtKB-UniRule"/>
</dbReference>
<dbReference type="GO" id="GO:0043908">
    <property type="term" value="F:Ser(Gly)-tRNA(Ala) hydrolase activity"/>
    <property type="evidence" value="ECO:0007669"/>
    <property type="project" value="UniProtKB-UniRule"/>
</dbReference>
<dbReference type="GO" id="GO:0000049">
    <property type="term" value="F:tRNA binding"/>
    <property type="evidence" value="ECO:0007669"/>
    <property type="project" value="UniProtKB-UniRule"/>
</dbReference>
<dbReference type="GO" id="GO:0019478">
    <property type="term" value="P:D-amino acid catabolic process"/>
    <property type="evidence" value="ECO:0007669"/>
    <property type="project" value="UniProtKB-UniRule"/>
</dbReference>
<dbReference type="CDD" id="cd00563">
    <property type="entry name" value="Dtyr_deacylase"/>
    <property type="match status" value="1"/>
</dbReference>
<dbReference type="FunFam" id="3.50.80.10:FF:000001">
    <property type="entry name" value="D-aminoacyl-tRNA deacylase"/>
    <property type="match status" value="1"/>
</dbReference>
<dbReference type="Gene3D" id="3.50.80.10">
    <property type="entry name" value="D-tyrosyl-tRNA(Tyr) deacylase"/>
    <property type="match status" value="1"/>
</dbReference>
<dbReference type="HAMAP" id="MF_00518">
    <property type="entry name" value="Deacylase_Dtd"/>
    <property type="match status" value="1"/>
</dbReference>
<dbReference type="InterPro" id="IPR003732">
    <property type="entry name" value="Daa-tRNA_deacyls_DTD"/>
</dbReference>
<dbReference type="InterPro" id="IPR023509">
    <property type="entry name" value="DTD-like_sf"/>
</dbReference>
<dbReference type="NCBIfam" id="TIGR00256">
    <property type="entry name" value="D-aminoacyl-tRNA deacylase"/>
    <property type="match status" value="1"/>
</dbReference>
<dbReference type="PANTHER" id="PTHR10472:SF5">
    <property type="entry name" value="D-AMINOACYL-TRNA DEACYLASE 1"/>
    <property type="match status" value="1"/>
</dbReference>
<dbReference type="PANTHER" id="PTHR10472">
    <property type="entry name" value="D-TYROSYL-TRNA TYR DEACYLASE"/>
    <property type="match status" value="1"/>
</dbReference>
<dbReference type="Pfam" id="PF02580">
    <property type="entry name" value="Tyr_Deacylase"/>
    <property type="match status" value="1"/>
</dbReference>
<dbReference type="SUPFAM" id="SSF69500">
    <property type="entry name" value="DTD-like"/>
    <property type="match status" value="1"/>
</dbReference>
<name>DTD_FLAPJ</name>
<feature type="chain" id="PRO_1000050833" description="D-aminoacyl-tRNA deacylase">
    <location>
        <begin position="1"/>
        <end position="150"/>
    </location>
</feature>
<feature type="short sequence motif" description="Gly-cisPro motif, important for rejection of L-amino acids" evidence="1">
    <location>
        <begin position="138"/>
        <end position="139"/>
    </location>
</feature>
<accession>A6GW89</accession>
<organism>
    <name type="scientific">Flavobacterium psychrophilum (strain ATCC 49511 / DSM 21280 / CIP 103535 / JIP02/86)</name>
    <dbReference type="NCBI Taxonomy" id="402612"/>
    <lineage>
        <taxon>Bacteria</taxon>
        <taxon>Pseudomonadati</taxon>
        <taxon>Bacteroidota</taxon>
        <taxon>Flavobacteriia</taxon>
        <taxon>Flavobacteriales</taxon>
        <taxon>Flavobacteriaceae</taxon>
        <taxon>Flavobacterium</taxon>
    </lineage>
</organism>
<reference key="1">
    <citation type="journal article" date="2007" name="Nat. Biotechnol.">
        <title>Complete genome sequence of the fish pathogen Flavobacterium psychrophilum.</title>
        <authorList>
            <person name="Duchaud E."/>
            <person name="Boussaha M."/>
            <person name="Loux V."/>
            <person name="Bernardet J.-F."/>
            <person name="Michel C."/>
            <person name="Kerouault B."/>
            <person name="Mondot S."/>
            <person name="Nicolas P."/>
            <person name="Bossy R."/>
            <person name="Caron C."/>
            <person name="Bessieres P."/>
            <person name="Gibrat J.-F."/>
            <person name="Claverol S."/>
            <person name="Dumetz F."/>
            <person name="Le Henaff M."/>
            <person name="Benmansour A."/>
        </authorList>
    </citation>
    <scope>NUCLEOTIDE SEQUENCE [LARGE SCALE GENOMIC DNA]</scope>
    <source>
        <strain>ATCC 49511 / DSM 21280 / CIP 103535 / JIP02/86</strain>
    </source>
</reference>
<sequence>MKVVIQRVSQASVTIDSKIVAKIQKGLLILVGIEDSDNQEDINWLSSKIINLRIFEDKNEVMNLSVKDINGEIIVVSQFTLQALTKKGNRPSYIKASKPEIAIPLYQSFVSQLETELGKKVQTGIFGADMKVSLINDGPVTIIIDSKNKE</sequence>
<evidence type="ECO:0000255" key="1">
    <source>
        <dbReference type="HAMAP-Rule" id="MF_00518"/>
    </source>
</evidence>
<proteinExistence type="inferred from homology"/>